<organism>
    <name type="scientific">Pyrobaculum islandicum (strain DSM 4184 / JCM 9189 / GEO3)</name>
    <dbReference type="NCBI Taxonomy" id="384616"/>
    <lineage>
        <taxon>Archaea</taxon>
        <taxon>Thermoproteota</taxon>
        <taxon>Thermoprotei</taxon>
        <taxon>Thermoproteales</taxon>
        <taxon>Thermoproteaceae</taxon>
        <taxon>Pyrobaculum</taxon>
    </lineage>
</organism>
<accession>A1RRZ4</accession>
<name>NTPTH_PYRIL</name>
<evidence type="ECO:0000255" key="1">
    <source>
        <dbReference type="HAMAP-Rule" id="MF_00796"/>
    </source>
</evidence>
<sequence>MTLRERAELKLGISGMPGVGKTTLVTKVLEVAKSKFAICGFITVEVRDGGKRIGFDIIDVNSGERKPFAREGIGMPSVGKYVINLGTCTLISKALRHKPCNLAIVDEIGAMEFKCPNFTTDLEEVVSNTPRILATIHRNYIGIAKRLGFEVIWLTRENWEMTYKQVLKRLGLSI</sequence>
<dbReference type="EC" id="3.6.1.15" evidence="1"/>
<dbReference type="EMBL" id="CP000504">
    <property type="protein sequence ID" value="ABL87726.1"/>
    <property type="molecule type" value="Genomic_DNA"/>
</dbReference>
<dbReference type="RefSeq" id="WP_011762302.1">
    <property type="nucleotide sequence ID" value="NC_008701.1"/>
</dbReference>
<dbReference type="SMR" id="A1RRZ4"/>
<dbReference type="STRING" id="384616.Pisl_0548"/>
<dbReference type="GeneID" id="4617149"/>
<dbReference type="KEGG" id="pis:Pisl_0548"/>
<dbReference type="eggNOG" id="arCOG01034">
    <property type="taxonomic scope" value="Archaea"/>
</dbReference>
<dbReference type="HOGENOM" id="CLU_103145_1_1_2"/>
<dbReference type="OrthoDB" id="52698at2157"/>
<dbReference type="Proteomes" id="UP000002595">
    <property type="component" value="Chromosome"/>
</dbReference>
<dbReference type="GO" id="GO:0005524">
    <property type="term" value="F:ATP binding"/>
    <property type="evidence" value="ECO:0007669"/>
    <property type="project" value="UniProtKB-UniRule"/>
</dbReference>
<dbReference type="GO" id="GO:0017111">
    <property type="term" value="F:ribonucleoside triphosphate phosphatase activity"/>
    <property type="evidence" value="ECO:0007669"/>
    <property type="project" value="UniProtKB-UniRule"/>
</dbReference>
<dbReference type="CDD" id="cd19482">
    <property type="entry name" value="RecA-like_Thep1"/>
    <property type="match status" value="1"/>
</dbReference>
<dbReference type="Gene3D" id="3.40.50.300">
    <property type="entry name" value="P-loop containing nucleotide triphosphate hydrolases"/>
    <property type="match status" value="1"/>
</dbReference>
<dbReference type="HAMAP" id="MF_00796">
    <property type="entry name" value="NTPase_1"/>
    <property type="match status" value="1"/>
</dbReference>
<dbReference type="InterPro" id="IPR004948">
    <property type="entry name" value="Nuc-triphosphatase_THEP1"/>
</dbReference>
<dbReference type="InterPro" id="IPR027417">
    <property type="entry name" value="P-loop_NTPase"/>
</dbReference>
<dbReference type="NCBIfam" id="NF010248">
    <property type="entry name" value="PRK13695.1"/>
    <property type="match status" value="1"/>
</dbReference>
<dbReference type="PANTHER" id="PTHR43146">
    <property type="entry name" value="CANCER-RELATED NUCLEOSIDE-TRIPHOSPHATASE"/>
    <property type="match status" value="1"/>
</dbReference>
<dbReference type="PANTHER" id="PTHR43146:SF1">
    <property type="entry name" value="CANCER-RELATED NUCLEOSIDE-TRIPHOSPHATASE"/>
    <property type="match status" value="1"/>
</dbReference>
<dbReference type="Pfam" id="PF03266">
    <property type="entry name" value="NTPase_1"/>
    <property type="match status" value="1"/>
</dbReference>
<dbReference type="SUPFAM" id="SSF52540">
    <property type="entry name" value="P-loop containing nucleoside triphosphate hydrolases"/>
    <property type="match status" value="1"/>
</dbReference>
<reference key="1">
    <citation type="submission" date="2006-12" db="EMBL/GenBank/DDBJ databases">
        <title>Complete sequence of Pyrobaculum islandicum DSM 4184.</title>
        <authorList>
            <person name="Copeland A."/>
            <person name="Lucas S."/>
            <person name="Lapidus A."/>
            <person name="Barry K."/>
            <person name="Detter J.C."/>
            <person name="Glavina del Rio T."/>
            <person name="Dalin E."/>
            <person name="Tice H."/>
            <person name="Pitluck S."/>
            <person name="Meincke L."/>
            <person name="Brettin T."/>
            <person name="Bruce D."/>
            <person name="Han C."/>
            <person name="Tapia R."/>
            <person name="Gilna P."/>
            <person name="Schmutz J."/>
            <person name="Larimer F."/>
            <person name="Land M."/>
            <person name="Hauser L."/>
            <person name="Kyrpides N."/>
            <person name="Mikhailova N."/>
            <person name="Cozen A.E."/>
            <person name="Fitz-Gibbon S.T."/>
            <person name="House C.H."/>
            <person name="Saltikov C."/>
            <person name="Lowe T."/>
            <person name="Richardson P."/>
        </authorList>
    </citation>
    <scope>NUCLEOTIDE SEQUENCE [LARGE SCALE GENOMIC DNA]</scope>
    <source>
        <strain>DSM 4184 / JCM 9189 / GEO3</strain>
    </source>
</reference>
<protein>
    <recommendedName>
        <fullName evidence="1">Nucleoside-triphosphatase THEP1</fullName>
        <shortName evidence="1">NTPase THEP1</shortName>
        <ecNumber evidence="1">3.6.1.15</ecNumber>
    </recommendedName>
    <alternativeName>
        <fullName evidence="1">Nucleoside triphosphate phosphohydrolase</fullName>
    </alternativeName>
</protein>
<feature type="chain" id="PRO_0000360027" description="Nucleoside-triphosphatase THEP1">
    <location>
        <begin position="1"/>
        <end position="174"/>
    </location>
</feature>
<feature type="binding site" evidence="1">
    <location>
        <begin position="15"/>
        <end position="22"/>
    </location>
    <ligand>
        <name>ATP</name>
        <dbReference type="ChEBI" id="CHEBI:30616"/>
    </ligand>
</feature>
<feature type="binding site" evidence="1">
    <location>
        <begin position="102"/>
        <end position="109"/>
    </location>
    <ligand>
        <name>ATP</name>
        <dbReference type="ChEBI" id="CHEBI:30616"/>
    </ligand>
</feature>
<keyword id="KW-0067">ATP-binding</keyword>
<keyword id="KW-0378">Hydrolase</keyword>
<keyword id="KW-0547">Nucleotide-binding</keyword>
<proteinExistence type="inferred from homology"/>
<comment type="function">
    <text evidence="1">Has nucleotide phosphatase activity towards ATP, GTP, CTP, TTP and UTP. May hydrolyze nucleoside diphosphates with lower efficiency.</text>
</comment>
<comment type="catalytic activity">
    <reaction evidence="1">
        <text>a ribonucleoside 5'-triphosphate + H2O = a ribonucleoside 5'-diphosphate + phosphate + H(+)</text>
        <dbReference type="Rhea" id="RHEA:23680"/>
        <dbReference type="ChEBI" id="CHEBI:15377"/>
        <dbReference type="ChEBI" id="CHEBI:15378"/>
        <dbReference type="ChEBI" id="CHEBI:43474"/>
        <dbReference type="ChEBI" id="CHEBI:57930"/>
        <dbReference type="ChEBI" id="CHEBI:61557"/>
        <dbReference type="EC" id="3.6.1.15"/>
    </reaction>
</comment>
<comment type="similarity">
    <text evidence="1">Belongs to the THEP1 NTPase family.</text>
</comment>
<gene>
    <name type="ordered locus">Pisl_0548</name>
</gene>